<accession>P49309</accession>
<feature type="chain" id="PRO_0000050654" description="Probable rhizopine catabolism regulatory protein MocR">
    <location>
        <begin position="1"/>
        <end position="493"/>
    </location>
</feature>
<feature type="domain" description="HTH gntR-type" evidence="2">
    <location>
        <begin position="10"/>
        <end position="78"/>
    </location>
</feature>
<feature type="DNA-binding region" description="H-T-H motif" evidence="2">
    <location>
        <begin position="38"/>
        <end position="57"/>
    </location>
</feature>
<feature type="modified residue" description="N6-(pyridoxal phosphate)lysine" evidence="1">
    <location>
        <position position="319"/>
    </location>
</feature>
<reference key="1">
    <citation type="journal article" date="1994" name="Mol. Gen. Genet.">
        <title>Molecular and genetic characterization of the rhizopine catabolism (mocABRC) genes of Rhizobium meliloti L5-30.</title>
        <authorList>
            <person name="Rossbach S."/>
            <person name="Kulpa D.A."/>
            <person name="Rossbach U."/>
            <person name="de Bruijn F.J."/>
        </authorList>
    </citation>
    <scope>NUCLEOTIDE SEQUENCE [GENOMIC DNA]</scope>
    <source>
        <strain>L5-30</strain>
    </source>
</reference>
<organism>
    <name type="scientific">Rhizobium meliloti</name>
    <name type="common">Ensifer meliloti</name>
    <name type="synonym">Sinorhizobium meliloti</name>
    <dbReference type="NCBI Taxonomy" id="382"/>
    <lineage>
        <taxon>Bacteria</taxon>
        <taxon>Pseudomonadati</taxon>
        <taxon>Pseudomonadota</taxon>
        <taxon>Alphaproteobacteria</taxon>
        <taxon>Hyphomicrobiales</taxon>
        <taxon>Rhizobiaceae</taxon>
        <taxon>Sinorhizobium/Ensifer group</taxon>
        <taxon>Sinorhizobium</taxon>
    </lineage>
</organism>
<keyword id="KW-0032">Aminotransferase</keyword>
<keyword id="KW-0238">DNA-binding</keyword>
<keyword id="KW-0663">Pyridoxal phosphate</keyword>
<keyword id="KW-0804">Transcription</keyword>
<keyword id="KW-0805">Transcription regulation</keyword>
<keyword id="KW-0808">Transferase</keyword>
<comment type="function">
    <text>Could play a regulatory role in the transcription of the moc genes for rhizopine catabolism. Could also have an aminotransferase activity.</text>
</comment>
<comment type="cofactor">
    <cofactor evidence="3">
        <name>pyridoxal 5'-phosphate</name>
        <dbReference type="ChEBI" id="CHEBI:597326"/>
    </cofactor>
</comment>
<comment type="similarity">
    <text evidence="3">In the C-terminal section; belongs to the class-I pyridoxal-phosphate-dependent aminotransferase family.</text>
</comment>
<dbReference type="EMBL" id="X78503">
    <property type="protein sequence ID" value="CAA55271.1"/>
    <property type="molecule type" value="Genomic_DNA"/>
</dbReference>
<dbReference type="PIR" id="S51574">
    <property type="entry name" value="S51574"/>
</dbReference>
<dbReference type="SMR" id="P49309"/>
<dbReference type="PATRIC" id="fig|382.53.peg.1554"/>
<dbReference type="GO" id="GO:0003677">
    <property type="term" value="F:DNA binding"/>
    <property type="evidence" value="ECO:0007669"/>
    <property type="project" value="UniProtKB-KW"/>
</dbReference>
<dbReference type="GO" id="GO:0003700">
    <property type="term" value="F:DNA-binding transcription factor activity"/>
    <property type="evidence" value="ECO:0007669"/>
    <property type="project" value="InterPro"/>
</dbReference>
<dbReference type="GO" id="GO:0030170">
    <property type="term" value="F:pyridoxal phosphate binding"/>
    <property type="evidence" value="ECO:0007669"/>
    <property type="project" value="InterPro"/>
</dbReference>
<dbReference type="GO" id="GO:0008483">
    <property type="term" value="F:transaminase activity"/>
    <property type="evidence" value="ECO:0007669"/>
    <property type="project" value="UniProtKB-KW"/>
</dbReference>
<dbReference type="GO" id="GO:0009058">
    <property type="term" value="P:biosynthetic process"/>
    <property type="evidence" value="ECO:0007669"/>
    <property type="project" value="InterPro"/>
</dbReference>
<dbReference type="CDD" id="cd00609">
    <property type="entry name" value="AAT_like"/>
    <property type="match status" value="1"/>
</dbReference>
<dbReference type="CDD" id="cd07377">
    <property type="entry name" value="WHTH_GntR"/>
    <property type="match status" value="1"/>
</dbReference>
<dbReference type="Gene3D" id="3.40.640.10">
    <property type="entry name" value="Type I PLP-dependent aspartate aminotransferase-like (Major domain)"/>
    <property type="match status" value="1"/>
</dbReference>
<dbReference type="Gene3D" id="1.10.10.10">
    <property type="entry name" value="Winged helix-like DNA-binding domain superfamily/Winged helix DNA-binding domain"/>
    <property type="match status" value="1"/>
</dbReference>
<dbReference type="InterPro" id="IPR004839">
    <property type="entry name" value="Aminotransferase_I/II_large"/>
</dbReference>
<dbReference type="InterPro" id="IPR051446">
    <property type="entry name" value="HTH_trans_reg/aminotransferase"/>
</dbReference>
<dbReference type="InterPro" id="IPR015424">
    <property type="entry name" value="PyrdxlP-dep_Trfase"/>
</dbReference>
<dbReference type="InterPro" id="IPR015421">
    <property type="entry name" value="PyrdxlP-dep_Trfase_major"/>
</dbReference>
<dbReference type="InterPro" id="IPR000524">
    <property type="entry name" value="Tscrpt_reg_HTH_GntR"/>
</dbReference>
<dbReference type="InterPro" id="IPR036388">
    <property type="entry name" value="WH-like_DNA-bd_sf"/>
</dbReference>
<dbReference type="InterPro" id="IPR036390">
    <property type="entry name" value="WH_DNA-bd_sf"/>
</dbReference>
<dbReference type="PANTHER" id="PTHR46577">
    <property type="entry name" value="HTH-TYPE TRANSCRIPTIONAL REGULATORY PROTEIN GABR"/>
    <property type="match status" value="1"/>
</dbReference>
<dbReference type="PANTHER" id="PTHR46577:SF1">
    <property type="entry name" value="HTH-TYPE TRANSCRIPTIONAL REGULATORY PROTEIN GABR"/>
    <property type="match status" value="1"/>
</dbReference>
<dbReference type="Pfam" id="PF00155">
    <property type="entry name" value="Aminotran_1_2"/>
    <property type="match status" value="1"/>
</dbReference>
<dbReference type="Pfam" id="PF00392">
    <property type="entry name" value="GntR"/>
    <property type="match status" value="1"/>
</dbReference>
<dbReference type="SMART" id="SM00345">
    <property type="entry name" value="HTH_GNTR"/>
    <property type="match status" value="1"/>
</dbReference>
<dbReference type="SUPFAM" id="SSF53383">
    <property type="entry name" value="PLP-dependent transferases"/>
    <property type="match status" value="1"/>
</dbReference>
<dbReference type="SUPFAM" id="SSF46785">
    <property type="entry name" value="Winged helix' DNA-binding domain"/>
    <property type="match status" value="1"/>
</dbReference>
<dbReference type="PROSITE" id="PS50949">
    <property type="entry name" value="HTH_GNTR"/>
    <property type="match status" value="1"/>
</dbReference>
<gene>
    <name type="primary">mocR</name>
</gene>
<sequence>MLVLDRDADVPMHRQLYEKLRAEILAGHLKADTRLPPTRMMAEDLGVSRNTVITTYDALLAEGYLESRSGSGTWVATLPPDAVTARNSVGRAGAPSLSSRGMRMAAQPRDRTIPDRIAFHPGYPEIKAFPFSTWARLLKRHARYSHEDLYGYHWVTGHPRLKAAIAEYLRASRGVECAPEQVIVVNGTQAALDILARMLVDEGDICWMEEPGYIGAQNSLLSAGAKLVPLPVERDGWSLEDETRPSPRLIFVTPSCQWPLGCLMRMEDRLRLLQIGERHDAWIVEDDYDSEYRFRGRPVPAMQGLDKSGRVIYMGTFAKTLFPSLRIGFIVVPPQLADGFKRVVSNTGHYPSLLLQAALADFISEGYFATHLRRMRRLYAERQKVFVALCRRHLADWLTIDENDAGMQLVARFTRALEDEVLWRAAQGQGVNFSPLSRQFFHSPPQQGAILGYAGIDPKTMREGINSLRSAFLALESSGALPLDRATAAPRGC</sequence>
<evidence type="ECO:0000250" key="1"/>
<evidence type="ECO:0000255" key="2">
    <source>
        <dbReference type="PROSITE-ProRule" id="PRU00307"/>
    </source>
</evidence>
<evidence type="ECO:0000305" key="3"/>
<name>MOCR_RHIML</name>
<protein>
    <recommendedName>
        <fullName>Probable rhizopine catabolism regulatory protein MocR</fullName>
    </recommendedName>
</protein>
<proteinExistence type="inferred from homology"/>